<protein>
    <recommendedName>
        <fullName evidence="1">D-alanyl carrier protein</fullName>
        <shortName evidence="1">DCP</shortName>
    </recommendedName>
    <alternativeName>
        <fullName evidence="1">D-alanine--poly(phosphoribitol) ligase subunit 2</fullName>
    </alternativeName>
</protein>
<sequence length="79" mass="9010">MSIEETVIELFDRLFMEDVSEMMDEDLFDAGVLDSLGTVELIVELESTFNIKVPISEFGRDDWNTVTKIVQGVEELQHA</sequence>
<keyword id="KW-0961">Cell wall biogenesis/degradation</keyword>
<keyword id="KW-0963">Cytoplasm</keyword>
<keyword id="KW-0596">Phosphopantetheine</keyword>
<keyword id="KW-0597">Phosphoprotein</keyword>
<accession>Q5XBN7</accession>
<comment type="function">
    <text evidence="1">Carrier protein involved in the D-alanylation of lipoteichoic acid (LTA). The loading of thioester-linked D-alanine onto DltC is catalyzed by D-alanine--D-alanyl carrier protein ligase DltA. The DltC-carried D-alanyl group is further transferred to cell membrane phosphatidylglycerol (PG) by forming an ester bond, probably catalyzed by DltD. D-alanylation of LTA plays an important role in modulating the properties of the cell wall in Gram-positive bacteria, influencing the net charge of the cell wall.</text>
</comment>
<comment type="pathway">
    <text evidence="1">Cell wall biogenesis; lipoteichoic acid biosynthesis.</text>
</comment>
<comment type="subcellular location">
    <subcellularLocation>
        <location evidence="1">Cytoplasm</location>
    </subcellularLocation>
</comment>
<comment type="PTM">
    <text evidence="1">4'-phosphopantetheine is transferred from CoA to a specific serine of apo-DCP.</text>
</comment>
<comment type="similarity">
    <text evidence="1">Belongs to the DltC family.</text>
</comment>
<evidence type="ECO:0000255" key="1">
    <source>
        <dbReference type="HAMAP-Rule" id="MF_00565"/>
    </source>
</evidence>
<organism>
    <name type="scientific">Streptococcus pyogenes serotype M6 (strain ATCC BAA-946 / MGAS10394)</name>
    <dbReference type="NCBI Taxonomy" id="286636"/>
    <lineage>
        <taxon>Bacteria</taxon>
        <taxon>Bacillati</taxon>
        <taxon>Bacillota</taxon>
        <taxon>Bacilli</taxon>
        <taxon>Lactobacillales</taxon>
        <taxon>Streptococcaceae</taxon>
        <taxon>Streptococcus</taxon>
    </lineage>
</organism>
<feature type="chain" id="PRO_0000213116" description="D-alanyl carrier protein">
    <location>
        <begin position="1"/>
        <end position="79"/>
    </location>
</feature>
<feature type="domain" description="Carrier" evidence="1">
    <location>
        <begin position="1"/>
        <end position="77"/>
    </location>
</feature>
<feature type="modified residue" description="O-(pantetheine 4'-phosphoryl)serine" evidence="1">
    <location>
        <position position="35"/>
    </location>
</feature>
<reference key="1">
    <citation type="journal article" date="2004" name="J. Infect. Dis.">
        <title>Progress toward characterization of the group A Streptococcus metagenome: complete genome sequence of a macrolide-resistant serotype M6 strain.</title>
        <authorList>
            <person name="Banks D.J."/>
            <person name="Porcella S.F."/>
            <person name="Barbian K.D."/>
            <person name="Beres S.B."/>
            <person name="Philips L.E."/>
            <person name="Voyich J.M."/>
            <person name="DeLeo F.R."/>
            <person name="Martin J.M."/>
            <person name="Somerville G.A."/>
            <person name="Musser J.M."/>
        </authorList>
    </citation>
    <scope>NUCLEOTIDE SEQUENCE [LARGE SCALE GENOMIC DNA]</scope>
    <source>
        <strain>ATCC BAA-946 / MGAS10394</strain>
    </source>
</reference>
<dbReference type="EMBL" id="CP000003">
    <property type="protein sequence ID" value="AAT87176.1"/>
    <property type="molecule type" value="Genomic_DNA"/>
</dbReference>
<dbReference type="RefSeq" id="WP_002984216.1">
    <property type="nucleotide sequence ID" value="NC_006086.1"/>
</dbReference>
<dbReference type="SMR" id="Q5XBN7"/>
<dbReference type="GeneID" id="83690920"/>
<dbReference type="KEGG" id="spa:M6_Spy1041"/>
<dbReference type="HOGENOM" id="CLU_108696_19_0_9"/>
<dbReference type="UniPathway" id="UPA00556"/>
<dbReference type="Proteomes" id="UP000001167">
    <property type="component" value="Chromosome"/>
</dbReference>
<dbReference type="GO" id="GO:0005737">
    <property type="term" value="C:cytoplasm"/>
    <property type="evidence" value="ECO:0007669"/>
    <property type="project" value="UniProtKB-SubCell"/>
</dbReference>
<dbReference type="GO" id="GO:0036370">
    <property type="term" value="F:D-alanyl carrier activity"/>
    <property type="evidence" value="ECO:0007669"/>
    <property type="project" value="UniProtKB-UniRule"/>
</dbReference>
<dbReference type="GO" id="GO:0071555">
    <property type="term" value="P:cell wall organization"/>
    <property type="evidence" value="ECO:0007669"/>
    <property type="project" value="UniProtKB-KW"/>
</dbReference>
<dbReference type="GO" id="GO:0070395">
    <property type="term" value="P:lipoteichoic acid biosynthetic process"/>
    <property type="evidence" value="ECO:0007669"/>
    <property type="project" value="UniProtKB-UniRule"/>
</dbReference>
<dbReference type="Gene3D" id="1.10.1200.10">
    <property type="entry name" value="ACP-like"/>
    <property type="match status" value="1"/>
</dbReference>
<dbReference type="HAMAP" id="MF_00565">
    <property type="entry name" value="DltC"/>
    <property type="match status" value="1"/>
</dbReference>
<dbReference type="InterPro" id="IPR036736">
    <property type="entry name" value="ACP-like_sf"/>
</dbReference>
<dbReference type="InterPro" id="IPR003230">
    <property type="entry name" value="DltC"/>
</dbReference>
<dbReference type="InterPro" id="IPR009081">
    <property type="entry name" value="PP-bd_ACP"/>
</dbReference>
<dbReference type="NCBIfam" id="TIGR01688">
    <property type="entry name" value="dltC"/>
    <property type="match status" value="1"/>
</dbReference>
<dbReference type="NCBIfam" id="NF003464">
    <property type="entry name" value="PRK05087.1"/>
    <property type="match status" value="1"/>
</dbReference>
<dbReference type="Pfam" id="PF00550">
    <property type="entry name" value="PP-binding"/>
    <property type="match status" value="1"/>
</dbReference>
<dbReference type="SUPFAM" id="SSF47336">
    <property type="entry name" value="ACP-like"/>
    <property type="match status" value="1"/>
</dbReference>
<dbReference type="PROSITE" id="PS50075">
    <property type="entry name" value="CARRIER"/>
    <property type="match status" value="1"/>
</dbReference>
<proteinExistence type="inferred from homology"/>
<name>DLTC_STRP6</name>
<gene>
    <name evidence="1" type="primary">dltC</name>
    <name type="ordered locus">M6_Spy1041</name>
</gene>